<protein>
    <recommendedName>
        <fullName evidence="11">Calcium-dependent lipid-binding protein</fullName>
        <shortName evidence="11">AtCLB</shortName>
        <shortName evidence="10">CaLB protein</shortName>
    </recommendedName>
    <alternativeName>
        <fullName>Protein NTMC 2 TYPE 4</fullName>
        <shortName>NTMC2TYPE4</shortName>
    </alternativeName>
</protein>
<comment type="function">
    <text evidence="2 8">May be involved in membrane trafficking (By similarity). Acts as a repressor of abiotic stress (e.g. drought and salt) responses by binding specifically to the promoter of THAS1 to regulate its transcription (PubMed:21252258). Binds to membrane lipid ceramides (PubMed:21252258).</text>
</comment>
<comment type="cofactor">
    <cofactor evidence="1">
        <name>Ca(2+)</name>
        <dbReference type="ChEBI" id="CHEBI:29108"/>
    </cofactor>
</comment>
<comment type="subunit">
    <text evidence="9">Interacts with the biotrophic pathogenic fungi Microbotryum violaceum effector MVLG_01732.</text>
</comment>
<comment type="subcellular location">
    <subcellularLocation>
        <location evidence="8">Nucleus membrane</location>
        <topology evidence="4">Single-pass membrane protein</topology>
    </subcellularLocation>
    <text evidence="8">Localized in the nucleus membrane of root tips cells.</text>
</comment>
<comment type="tissue specificity">
    <text evidence="8">Mostly expressed in rosette leaves and flowers, to lower extent, in cauline leaves, roots and stems, and, at low levels, in siliques.</text>
</comment>
<comment type="domain">
    <text evidence="6">The SMP-LTD domain is a barrel-like domain that can bind various types of glycerophospholipids in its interior and mediate their transfer between two adjacent bilayers.</text>
</comment>
<comment type="disruption phenotype">
    <text evidence="8">Enhanced drought and salt tolerance and modified gravitropic response associated with an increased expression of THAS1 (PubMed:21252258). Higher root lengths (PubMed:21252258).</text>
</comment>
<comment type="similarity">
    <text evidence="12">Belongs to the synaptotagmin family.</text>
</comment>
<comment type="sequence caution" evidence="12">
    <conflict type="erroneous initiation">
        <sequence resource="EMBL-CDS" id="CAA65416"/>
    </conflict>
    <text>Truncated N-terminus.</text>
</comment>
<organism>
    <name type="scientific">Arabidopsis thaliana</name>
    <name type="common">Mouse-ear cress</name>
    <dbReference type="NCBI Taxonomy" id="3702"/>
    <lineage>
        <taxon>Eukaryota</taxon>
        <taxon>Viridiplantae</taxon>
        <taxon>Streptophyta</taxon>
        <taxon>Embryophyta</taxon>
        <taxon>Tracheophyta</taxon>
        <taxon>Spermatophyta</taxon>
        <taxon>Magnoliopsida</taxon>
        <taxon>eudicotyledons</taxon>
        <taxon>Gunneridae</taxon>
        <taxon>Pentapetalae</taxon>
        <taxon>rosids</taxon>
        <taxon>malvids</taxon>
        <taxon>Brassicales</taxon>
        <taxon>Brassicaceae</taxon>
        <taxon>Camelineae</taxon>
        <taxon>Arabidopsis</taxon>
    </lineage>
</organism>
<feature type="chain" id="PRO_0000450279" description="Calcium-dependent lipid-binding protein">
    <location>
        <begin position="1"/>
        <end position="510"/>
    </location>
</feature>
<feature type="transmembrane region" description="Helical" evidence="4">
    <location>
        <begin position="1"/>
        <end position="21"/>
    </location>
</feature>
<feature type="domain" description="SMP-LTD 1" evidence="6">
    <location>
        <begin position="66"/>
        <end position="250"/>
    </location>
</feature>
<feature type="domain" description="SMP-LTD 2" evidence="6">
    <location>
        <begin position="66"/>
        <end position="248"/>
    </location>
</feature>
<feature type="domain" description="C2 1" evidence="5">
    <location>
        <begin position="242"/>
        <end position="362"/>
    </location>
</feature>
<feature type="domain" description="C2" evidence="5">
    <location>
        <begin position="246"/>
        <end position="364"/>
    </location>
</feature>
<feature type="domain" description="C2 3" evidence="5">
    <location>
        <begin position="461"/>
        <end position="500"/>
    </location>
</feature>
<feature type="region of interest" description="Phospholipid binding" evidence="3">
    <location>
        <begin position="226"/>
        <end position="488"/>
    </location>
</feature>
<feature type="region of interest" description="Disordered" evidence="7">
    <location>
        <begin position="484"/>
        <end position="510"/>
    </location>
</feature>
<feature type="coiled-coil region" evidence="4">
    <location>
        <begin position="390"/>
        <end position="417"/>
    </location>
</feature>
<feature type="binding site" evidence="1">
    <location>
        <position position="278"/>
    </location>
    <ligand>
        <name>Ca(2+)</name>
        <dbReference type="ChEBI" id="CHEBI:29108"/>
        <label>1</label>
    </ligand>
</feature>
<feature type="binding site" evidence="1">
    <location>
        <position position="279"/>
    </location>
    <ligand>
        <name>Ca(2+)</name>
        <dbReference type="ChEBI" id="CHEBI:29108"/>
        <label>1</label>
    </ligand>
</feature>
<feature type="binding site" evidence="1">
    <location>
        <position position="279"/>
    </location>
    <ligand>
        <name>Ca(2+)</name>
        <dbReference type="ChEBI" id="CHEBI:29108"/>
        <label>2</label>
    </ligand>
</feature>
<feature type="binding site" evidence="1">
    <location>
        <position position="285"/>
    </location>
    <ligand>
        <name>Ca(2+)</name>
        <dbReference type="ChEBI" id="CHEBI:29108"/>
        <label>1</label>
    </ligand>
</feature>
<feature type="binding site" evidence="1">
    <location>
        <position position="285"/>
    </location>
    <ligand>
        <name>Ca(2+)</name>
        <dbReference type="ChEBI" id="CHEBI:29108"/>
        <label>2</label>
    </ligand>
</feature>
<feature type="binding site" evidence="1">
    <location>
        <position position="333"/>
    </location>
    <ligand>
        <name>Ca(2+)</name>
        <dbReference type="ChEBI" id="CHEBI:29108"/>
        <label>1</label>
    </ligand>
</feature>
<feature type="binding site" evidence="1">
    <location>
        <position position="333"/>
    </location>
    <ligand>
        <name>Ca(2+)</name>
        <dbReference type="ChEBI" id="CHEBI:29108"/>
        <label>2</label>
    </ligand>
</feature>
<feature type="binding site" evidence="1">
    <location>
        <position position="334"/>
    </location>
    <ligand>
        <name>Ca(2+)</name>
        <dbReference type="ChEBI" id="CHEBI:29108"/>
        <label>2</label>
    </ligand>
</feature>
<feature type="binding site" evidence="1">
    <location>
        <position position="335"/>
    </location>
    <ligand>
        <name>Ca(2+)</name>
        <dbReference type="ChEBI" id="CHEBI:29108"/>
        <label>1</label>
    </ligand>
</feature>
<feature type="binding site" evidence="1">
    <location>
        <position position="335"/>
    </location>
    <ligand>
        <name>Ca(2+)</name>
        <dbReference type="ChEBI" id="CHEBI:29108"/>
        <label>2</label>
    </ligand>
</feature>
<feature type="binding site" evidence="1">
    <location>
        <position position="335"/>
    </location>
    <ligand>
        <name>Ca(2+)</name>
        <dbReference type="ChEBI" id="CHEBI:29108"/>
        <label>3</label>
    </ligand>
</feature>
<feature type="binding site" evidence="1">
    <location>
        <position position="339"/>
    </location>
    <ligand>
        <name>Ca(2+)</name>
        <dbReference type="ChEBI" id="CHEBI:29108"/>
        <label>3</label>
    </ligand>
</feature>
<feature type="binding site" evidence="1">
    <location>
        <position position="340"/>
    </location>
    <ligand>
        <name>Ca(2+)</name>
        <dbReference type="ChEBI" id="CHEBI:29108"/>
        <label>1</label>
    </ligand>
</feature>
<feature type="sequence conflict" description="In Ref. 5; CAA65416." evidence="12" ref="5">
    <original>L</original>
    <variation>S</variation>
    <location>
        <position position="118"/>
    </location>
</feature>
<feature type="sequence conflict" description="In Ref. 5; CAA65416." evidence="12" ref="5">
    <original>V</original>
    <variation>F</variation>
    <location>
        <position position="245"/>
    </location>
</feature>
<feature type="sequence conflict" description="In Ref. 5; CAA65416." evidence="12" ref="5">
    <original>KAIE</original>
    <variation>NAID</variation>
    <location>
        <begin position="301"/>
        <end position="304"/>
    </location>
</feature>
<accession>Q9LEX1</accession>
<accession>P92940</accession>
<proteinExistence type="evidence at protein level"/>
<gene>
    <name evidence="11" type="primary">CLB</name>
    <name type="synonym">NTMC2T4</name>
    <name evidence="13" type="ordered locus">At3g61050</name>
    <name evidence="14" type="ORF">T27I15.140</name>
</gene>
<evidence type="ECO:0000250" key="1">
    <source>
        <dbReference type="UniProtKB" id="A0FGR8"/>
    </source>
</evidence>
<evidence type="ECO:0000250" key="2">
    <source>
        <dbReference type="UniProtKB" id="B6ETT4"/>
    </source>
</evidence>
<evidence type="ECO:0000250" key="3">
    <source>
        <dbReference type="UniProtKB" id="P48018"/>
    </source>
</evidence>
<evidence type="ECO:0000255" key="4"/>
<evidence type="ECO:0000255" key="5">
    <source>
        <dbReference type="PROSITE-ProRule" id="PRU00041"/>
    </source>
</evidence>
<evidence type="ECO:0000255" key="6">
    <source>
        <dbReference type="PROSITE-ProRule" id="PRU01194"/>
    </source>
</evidence>
<evidence type="ECO:0000256" key="7">
    <source>
        <dbReference type="SAM" id="MobiDB-lite"/>
    </source>
</evidence>
<evidence type="ECO:0000269" key="8">
    <source>
    </source>
</evidence>
<evidence type="ECO:0000269" key="9">
    <source>
    </source>
</evidence>
<evidence type="ECO:0000303" key="10">
    <source>
    </source>
</evidence>
<evidence type="ECO:0000303" key="11">
    <source>
    </source>
</evidence>
<evidence type="ECO:0000305" key="12"/>
<evidence type="ECO:0000312" key="13">
    <source>
        <dbReference type="Araport" id="AT3G61050"/>
    </source>
</evidence>
<evidence type="ECO:0000312" key="14">
    <source>
        <dbReference type="EMBL" id="CAB94141.1"/>
    </source>
</evidence>
<keyword id="KW-0106">Calcium</keyword>
<keyword id="KW-0175">Coiled coil</keyword>
<keyword id="KW-0445">Lipid transport</keyword>
<keyword id="KW-0446">Lipid-binding</keyword>
<keyword id="KW-0472">Membrane</keyword>
<keyword id="KW-0479">Metal-binding</keyword>
<keyword id="KW-0539">Nucleus</keyword>
<keyword id="KW-1185">Reference proteome</keyword>
<keyword id="KW-0677">Repeat</keyword>
<keyword id="KW-0678">Repressor</keyword>
<keyword id="KW-0346">Stress response</keyword>
<keyword id="KW-0804">Transcription</keyword>
<keyword id="KW-0805">Transcription regulation</keyword>
<keyword id="KW-0812">Transmembrane</keyword>
<keyword id="KW-1133">Transmembrane helix</keyword>
<keyword id="KW-0813">Transport</keyword>
<sequence length="510" mass="55095">MGLISGILFGIIFGVALMAGWSRMMTHRSSKRVAKAVDMKLLGSLSRDDLKKICGDNFPQWISFPAFEQVKWLNKLLSKMWPYIAEAATMVIRDSVEPLLEDYRPPGITSLKFSKLTLGNVAPKIEGIRVQSFKEGQVTMDVDLRWGGDPNIVLGVTALVASIPIQLKDLQVFTVARVIFQLADEIPCISAVVVALLAEPKPRIDYTLKAVGGSLTAIPGLSDMIDDTVDTIVKDMLQWPHRIVVPIGGIPVDLSDLELKPQGKLIVTVVKATNLKNKELIGKSDPYATIYIRPVFKYKTKAIENNLNPVWDQTFELIAEDKETQSLTVEVFDKDVGQDERLGLVKLPLSSLEAGVTKELELNLLSSLDTLKVKDKKDRGSITLKVHYHEFNKEEQMAALEDEKKIMEERKRLKEAGVIGSTMDAVGMVGSGLGAGVGMVGTGIGTGVGLVGSGVSSGVGMVGSGFGAVGSGLSKAGRFMGRTITGQSSKRSGSSTPVNTVPENDGAKQQ</sequence>
<dbReference type="EMBL" id="AL358732">
    <property type="protein sequence ID" value="CAB94141.1"/>
    <property type="molecule type" value="Genomic_DNA"/>
</dbReference>
<dbReference type="EMBL" id="CP002686">
    <property type="protein sequence ID" value="AEE80144.1"/>
    <property type="molecule type" value="Genomic_DNA"/>
</dbReference>
<dbReference type="EMBL" id="CP002686">
    <property type="protein sequence ID" value="AEE80145.1"/>
    <property type="molecule type" value="Genomic_DNA"/>
</dbReference>
<dbReference type="EMBL" id="BT004564">
    <property type="protein sequence ID" value="AAO42810.1"/>
    <property type="molecule type" value="mRNA"/>
</dbReference>
<dbReference type="EMBL" id="AK227322">
    <property type="protein sequence ID" value="BAE99336.1"/>
    <property type="molecule type" value="mRNA"/>
</dbReference>
<dbReference type="EMBL" id="X96598">
    <property type="protein sequence ID" value="CAA65416.1"/>
    <property type="status" value="ALT_INIT"/>
    <property type="molecule type" value="mRNA"/>
</dbReference>
<dbReference type="PIR" id="T50526">
    <property type="entry name" value="T50526"/>
</dbReference>
<dbReference type="RefSeq" id="NP_001030908.1">
    <property type="nucleotide sequence ID" value="NM_001035831.2"/>
</dbReference>
<dbReference type="RefSeq" id="NP_191664.1">
    <property type="nucleotide sequence ID" value="NM_115969.3"/>
</dbReference>
<dbReference type="SMR" id="Q9LEX1"/>
<dbReference type="FunCoup" id="Q9LEX1">
    <property type="interactions" value="2783"/>
</dbReference>
<dbReference type="STRING" id="3702.Q9LEX1"/>
<dbReference type="iPTMnet" id="Q9LEX1"/>
<dbReference type="PaxDb" id="3702-AT3G61050.2"/>
<dbReference type="ProteomicsDB" id="181262"/>
<dbReference type="EnsemblPlants" id="AT3G61050.1">
    <property type="protein sequence ID" value="AT3G61050.1"/>
    <property type="gene ID" value="AT3G61050"/>
</dbReference>
<dbReference type="EnsemblPlants" id="AT3G61050.2">
    <property type="protein sequence ID" value="AT3G61050.2"/>
    <property type="gene ID" value="AT3G61050"/>
</dbReference>
<dbReference type="GeneID" id="825277"/>
<dbReference type="Gramene" id="AT3G61050.1">
    <property type="protein sequence ID" value="AT3G61050.1"/>
    <property type="gene ID" value="AT3G61050"/>
</dbReference>
<dbReference type="Gramene" id="AT3G61050.2">
    <property type="protein sequence ID" value="AT3G61050.2"/>
    <property type="gene ID" value="AT3G61050"/>
</dbReference>
<dbReference type="KEGG" id="ath:AT3G61050"/>
<dbReference type="Araport" id="AT3G61050"/>
<dbReference type="TAIR" id="AT3G61050">
    <property type="gene designation" value="NTMC2T4"/>
</dbReference>
<dbReference type="eggNOG" id="KOG1012">
    <property type="taxonomic scope" value="Eukaryota"/>
</dbReference>
<dbReference type="HOGENOM" id="CLU_042212_1_0_1"/>
<dbReference type="InParanoid" id="Q9LEX1"/>
<dbReference type="OMA" id="MWPFIAD"/>
<dbReference type="PhylomeDB" id="Q9LEX1"/>
<dbReference type="CD-CODE" id="4299E36E">
    <property type="entry name" value="Nucleolus"/>
</dbReference>
<dbReference type="PRO" id="PR:Q9LEX1"/>
<dbReference type="Proteomes" id="UP000006548">
    <property type="component" value="Chromosome 3"/>
</dbReference>
<dbReference type="ExpressionAtlas" id="Q9LEX1">
    <property type="expression patterns" value="baseline and differential"/>
</dbReference>
<dbReference type="GO" id="GO:0005783">
    <property type="term" value="C:endoplasmic reticulum"/>
    <property type="evidence" value="ECO:0000314"/>
    <property type="project" value="TAIR"/>
</dbReference>
<dbReference type="GO" id="GO:0031965">
    <property type="term" value="C:nuclear membrane"/>
    <property type="evidence" value="ECO:0000314"/>
    <property type="project" value="TAIR"/>
</dbReference>
<dbReference type="GO" id="GO:0005886">
    <property type="term" value="C:plasma membrane"/>
    <property type="evidence" value="ECO:0007005"/>
    <property type="project" value="TAIR"/>
</dbReference>
<dbReference type="GO" id="GO:0097001">
    <property type="term" value="F:ceramide binding"/>
    <property type="evidence" value="ECO:0000314"/>
    <property type="project" value="UniProtKB"/>
</dbReference>
<dbReference type="GO" id="GO:0008289">
    <property type="term" value="F:lipid binding"/>
    <property type="evidence" value="ECO:0000314"/>
    <property type="project" value="TAIR"/>
</dbReference>
<dbReference type="GO" id="GO:0046872">
    <property type="term" value="F:metal ion binding"/>
    <property type="evidence" value="ECO:0007669"/>
    <property type="project" value="UniProtKB-KW"/>
</dbReference>
<dbReference type="GO" id="GO:0043565">
    <property type="term" value="F:sequence-specific DNA binding"/>
    <property type="evidence" value="ECO:0000314"/>
    <property type="project" value="TAIR"/>
</dbReference>
<dbReference type="GO" id="GO:0006869">
    <property type="term" value="P:lipid transport"/>
    <property type="evidence" value="ECO:0007669"/>
    <property type="project" value="UniProtKB-KW"/>
</dbReference>
<dbReference type="GO" id="GO:0045892">
    <property type="term" value="P:negative regulation of DNA-templated transcription"/>
    <property type="evidence" value="ECO:0000315"/>
    <property type="project" value="TAIR"/>
</dbReference>
<dbReference type="GO" id="GO:0009958">
    <property type="term" value="P:positive gravitropism"/>
    <property type="evidence" value="ECO:0000315"/>
    <property type="project" value="TAIR"/>
</dbReference>
<dbReference type="GO" id="GO:0009651">
    <property type="term" value="P:response to salt stress"/>
    <property type="evidence" value="ECO:0000315"/>
    <property type="project" value="TAIR"/>
</dbReference>
<dbReference type="GO" id="GO:0009414">
    <property type="term" value="P:response to water deprivation"/>
    <property type="evidence" value="ECO:0000315"/>
    <property type="project" value="TAIR"/>
</dbReference>
<dbReference type="CDD" id="cd00030">
    <property type="entry name" value="C2"/>
    <property type="match status" value="1"/>
</dbReference>
<dbReference type="CDD" id="cd21677">
    <property type="entry name" value="SMP_SYT"/>
    <property type="match status" value="1"/>
</dbReference>
<dbReference type="FunFam" id="2.60.40.150:FF:000130">
    <property type="entry name" value="synaptotagmin-4 isoform X1"/>
    <property type="match status" value="1"/>
</dbReference>
<dbReference type="Gene3D" id="2.60.40.150">
    <property type="entry name" value="C2 domain"/>
    <property type="match status" value="1"/>
</dbReference>
<dbReference type="InterPro" id="IPR000008">
    <property type="entry name" value="C2_dom"/>
</dbReference>
<dbReference type="InterPro" id="IPR035892">
    <property type="entry name" value="C2_domain_sf"/>
</dbReference>
<dbReference type="InterPro" id="IPR031468">
    <property type="entry name" value="SMP_LBD"/>
</dbReference>
<dbReference type="InterPro" id="IPR045050">
    <property type="entry name" value="Synaptotagmin_plant"/>
</dbReference>
<dbReference type="InterPro" id="IPR039010">
    <property type="entry name" value="Synaptotagmin_SMP"/>
</dbReference>
<dbReference type="PANTHER" id="PTHR10774:SF190">
    <property type="entry name" value="C2 CALCIUM_LIPID-BINDING ENDONUCLEASE_EXONUCLEASE_PHOSPHATASE-RELATED"/>
    <property type="match status" value="1"/>
</dbReference>
<dbReference type="PANTHER" id="PTHR10774">
    <property type="entry name" value="EXTENDED SYNAPTOTAGMIN-RELATED"/>
    <property type="match status" value="1"/>
</dbReference>
<dbReference type="Pfam" id="PF00168">
    <property type="entry name" value="C2"/>
    <property type="match status" value="1"/>
</dbReference>
<dbReference type="Pfam" id="PF17047">
    <property type="entry name" value="SMP_LBD"/>
    <property type="match status" value="1"/>
</dbReference>
<dbReference type="PRINTS" id="PR00360">
    <property type="entry name" value="C2DOMAIN"/>
</dbReference>
<dbReference type="SMART" id="SM00239">
    <property type="entry name" value="C2"/>
    <property type="match status" value="1"/>
</dbReference>
<dbReference type="SUPFAM" id="SSF49562">
    <property type="entry name" value="C2 domain (Calcium/lipid-binding domain, CaLB)"/>
    <property type="match status" value="1"/>
</dbReference>
<dbReference type="PROSITE" id="PS50004">
    <property type="entry name" value="C2"/>
    <property type="match status" value="1"/>
</dbReference>
<dbReference type="PROSITE" id="PS51847">
    <property type="entry name" value="SMP"/>
    <property type="match status" value="1"/>
</dbReference>
<reference key="1">
    <citation type="journal article" date="2000" name="Nature">
        <title>Sequence and analysis of chromosome 3 of the plant Arabidopsis thaliana.</title>
        <authorList>
            <person name="Salanoubat M."/>
            <person name="Lemcke K."/>
            <person name="Rieger M."/>
            <person name="Ansorge W."/>
            <person name="Unseld M."/>
            <person name="Fartmann B."/>
            <person name="Valle G."/>
            <person name="Bloecker H."/>
            <person name="Perez-Alonso M."/>
            <person name="Obermaier B."/>
            <person name="Delseny M."/>
            <person name="Boutry M."/>
            <person name="Grivell L.A."/>
            <person name="Mache R."/>
            <person name="Puigdomenech P."/>
            <person name="De Simone V."/>
            <person name="Choisne N."/>
            <person name="Artiguenave F."/>
            <person name="Robert C."/>
            <person name="Brottier P."/>
            <person name="Wincker P."/>
            <person name="Cattolico L."/>
            <person name="Weissenbach J."/>
            <person name="Saurin W."/>
            <person name="Quetier F."/>
            <person name="Schaefer M."/>
            <person name="Mueller-Auer S."/>
            <person name="Gabel C."/>
            <person name="Fuchs M."/>
            <person name="Benes V."/>
            <person name="Wurmbach E."/>
            <person name="Drzonek H."/>
            <person name="Erfle H."/>
            <person name="Jordan N."/>
            <person name="Bangert S."/>
            <person name="Wiedelmann R."/>
            <person name="Kranz H."/>
            <person name="Voss H."/>
            <person name="Holland R."/>
            <person name="Brandt P."/>
            <person name="Nyakatura G."/>
            <person name="Vezzi A."/>
            <person name="D'Angelo M."/>
            <person name="Pallavicini A."/>
            <person name="Toppo S."/>
            <person name="Simionati B."/>
            <person name="Conrad A."/>
            <person name="Hornischer K."/>
            <person name="Kauer G."/>
            <person name="Loehnert T.-H."/>
            <person name="Nordsiek G."/>
            <person name="Reichelt J."/>
            <person name="Scharfe M."/>
            <person name="Schoen O."/>
            <person name="Bargues M."/>
            <person name="Terol J."/>
            <person name="Climent J."/>
            <person name="Navarro P."/>
            <person name="Collado C."/>
            <person name="Perez-Perez A."/>
            <person name="Ottenwaelder B."/>
            <person name="Duchemin D."/>
            <person name="Cooke R."/>
            <person name="Laudie M."/>
            <person name="Berger-Llauro C."/>
            <person name="Purnelle B."/>
            <person name="Masuy D."/>
            <person name="de Haan M."/>
            <person name="Maarse A.C."/>
            <person name="Alcaraz J.-P."/>
            <person name="Cottet A."/>
            <person name="Casacuberta E."/>
            <person name="Monfort A."/>
            <person name="Argiriou A."/>
            <person name="Flores M."/>
            <person name="Liguori R."/>
            <person name="Vitale D."/>
            <person name="Mannhaupt G."/>
            <person name="Haase D."/>
            <person name="Schoof H."/>
            <person name="Rudd S."/>
            <person name="Zaccaria P."/>
            <person name="Mewes H.-W."/>
            <person name="Mayer K.F.X."/>
            <person name="Kaul S."/>
            <person name="Town C.D."/>
            <person name="Koo H.L."/>
            <person name="Tallon L.J."/>
            <person name="Jenkins J."/>
            <person name="Rooney T."/>
            <person name="Rizzo M."/>
            <person name="Walts A."/>
            <person name="Utterback T."/>
            <person name="Fujii C.Y."/>
            <person name="Shea T.P."/>
            <person name="Creasy T.H."/>
            <person name="Haas B."/>
            <person name="Maiti R."/>
            <person name="Wu D."/>
            <person name="Peterson J."/>
            <person name="Van Aken S."/>
            <person name="Pai G."/>
            <person name="Militscher J."/>
            <person name="Sellers P."/>
            <person name="Gill J.E."/>
            <person name="Feldblyum T.V."/>
            <person name="Preuss D."/>
            <person name="Lin X."/>
            <person name="Nierman W.C."/>
            <person name="Salzberg S.L."/>
            <person name="White O."/>
            <person name="Venter J.C."/>
            <person name="Fraser C.M."/>
            <person name="Kaneko T."/>
            <person name="Nakamura Y."/>
            <person name="Sato S."/>
            <person name="Kato T."/>
            <person name="Asamizu E."/>
            <person name="Sasamoto S."/>
            <person name="Kimura T."/>
            <person name="Idesawa K."/>
            <person name="Kawashima K."/>
            <person name="Kishida Y."/>
            <person name="Kiyokawa C."/>
            <person name="Kohara M."/>
            <person name="Matsumoto M."/>
            <person name="Matsuno A."/>
            <person name="Muraki A."/>
            <person name="Nakayama S."/>
            <person name="Nakazaki N."/>
            <person name="Shinpo S."/>
            <person name="Takeuchi C."/>
            <person name="Wada T."/>
            <person name="Watanabe A."/>
            <person name="Yamada M."/>
            <person name="Yasuda M."/>
            <person name="Tabata S."/>
        </authorList>
    </citation>
    <scope>NUCLEOTIDE SEQUENCE [LARGE SCALE GENOMIC DNA]</scope>
    <source>
        <strain>cv. Columbia</strain>
    </source>
</reference>
<reference key="2">
    <citation type="journal article" date="2017" name="Plant J.">
        <title>Araport11: a complete reannotation of the Arabidopsis thaliana reference genome.</title>
        <authorList>
            <person name="Cheng C.Y."/>
            <person name="Krishnakumar V."/>
            <person name="Chan A.P."/>
            <person name="Thibaud-Nissen F."/>
            <person name="Schobel S."/>
            <person name="Town C.D."/>
        </authorList>
    </citation>
    <scope>GENOME REANNOTATION</scope>
    <source>
        <strain>cv. Columbia</strain>
    </source>
</reference>
<reference key="3">
    <citation type="journal article" date="2003" name="Science">
        <title>Empirical analysis of transcriptional activity in the Arabidopsis genome.</title>
        <authorList>
            <person name="Yamada K."/>
            <person name="Lim J."/>
            <person name="Dale J.M."/>
            <person name="Chen H."/>
            <person name="Shinn P."/>
            <person name="Palm C.J."/>
            <person name="Southwick A.M."/>
            <person name="Wu H.C."/>
            <person name="Kim C.J."/>
            <person name="Nguyen M."/>
            <person name="Pham P.K."/>
            <person name="Cheuk R.F."/>
            <person name="Karlin-Newmann G."/>
            <person name="Liu S.X."/>
            <person name="Lam B."/>
            <person name="Sakano H."/>
            <person name="Wu T."/>
            <person name="Yu G."/>
            <person name="Miranda M."/>
            <person name="Quach H.L."/>
            <person name="Tripp M."/>
            <person name="Chang C.H."/>
            <person name="Lee J.M."/>
            <person name="Toriumi M.J."/>
            <person name="Chan M.M."/>
            <person name="Tang C.C."/>
            <person name="Onodera C.S."/>
            <person name="Deng J.M."/>
            <person name="Akiyama K."/>
            <person name="Ansari Y."/>
            <person name="Arakawa T."/>
            <person name="Banh J."/>
            <person name="Banno F."/>
            <person name="Bowser L."/>
            <person name="Brooks S.Y."/>
            <person name="Carninci P."/>
            <person name="Chao Q."/>
            <person name="Choy N."/>
            <person name="Enju A."/>
            <person name="Goldsmith A.D."/>
            <person name="Gurjal M."/>
            <person name="Hansen N.F."/>
            <person name="Hayashizaki Y."/>
            <person name="Johnson-Hopson C."/>
            <person name="Hsuan V.W."/>
            <person name="Iida K."/>
            <person name="Karnes M."/>
            <person name="Khan S."/>
            <person name="Koesema E."/>
            <person name="Ishida J."/>
            <person name="Jiang P.X."/>
            <person name="Jones T."/>
            <person name="Kawai J."/>
            <person name="Kamiya A."/>
            <person name="Meyers C."/>
            <person name="Nakajima M."/>
            <person name="Narusaka M."/>
            <person name="Seki M."/>
            <person name="Sakurai T."/>
            <person name="Satou M."/>
            <person name="Tamse R."/>
            <person name="Vaysberg M."/>
            <person name="Wallender E.K."/>
            <person name="Wong C."/>
            <person name="Yamamura Y."/>
            <person name="Yuan S."/>
            <person name="Shinozaki K."/>
            <person name="Davis R.W."/>
            <person name="Theologis A."/>
            <person name="Ecker J.R."/>
        </authorList>
    </citation>
    <scope>NUCLEOTIDE SEQUENCE [LARGE SCALE MRNA]</scope>
    <source>
        <strain>cv. Columbia</strain>
    </source>
</reference>
<reference key="4">
    <citation type="submission" date="2006-07" db="EMBL/GenBank/DDBJ databases">
        <title>Large-scale analysis of RIKEN Arabidopsis full-length (RAFL) cDNAs.</title>
        <authorList>
            <person name="Totoki Y."/>
            <person name="Seki M."/>
            <person name="Ishida J."/>
            <person name="Nakajima M."/>
            <person name="Enju A."/>
            <person name="Kamiya A."/>
            <person name="Narusaka M."/>
            <person name="Shin-i T."/>
            <person name="Nakagawa M."/>
            <person name="Sakamoto N."/>
            <person name="Oishi K."/>
            <person name="Kohara Y."/>
            <person name="Kobayashi M."/>
            <person name="Toyoda A."/>
            <person name="Sakaki Y."/>
            <person name="Sakurai T."/>
            <person name="Iida K."/>
            <person name="Akiyama K."/>
            <person name="Satou M."/>
            <person name="Toyoda T."/>
            <person name="Konagaya A."/>
            <person name="Carninci P."/>
            <person name="Kawai J."/>
            <person name="Hayashizaki Y."/>
            <person name="Shinozaki K."/>
        </authorList>
    </citation>
    <scope>NUCLEOTIDE SEQUENCE [LARGE SCALE MRNA]</scope>
    <source>
        <strain>cv. Columbia</strain>
    </source>
</reference>
<reference key="5">
    <citation type="submission" date="1996-03" db="EMBL/GenBank/DDBJ databases">
        <authorList>
            <person name="Kopka J."/>
            <person name="Pical C."/>
            <person name="Gray J.E."/>
            <person name="Mueller-Roeber B."/>
        </authorList>
    </citation>
    <scope>NUCLEOTIDE SEQUENCE [MRNA] OF 13-510</scope>
</reference>
<reference key="6">
    <citation type="journal article" date="2004" name="BMC Genomics">
        <title>Synaptotagmin gene content of the sequenced genomes.</title>
        <authorList>
            <person name="Craxton M.A."/>
        </authorList>
    </citation>
    <scope>GENE FAMILY</scope>
    <scope>NOMENCLATURE</scope>
</reference>
<reference key="7">
    <citation type="journal article" date="2009" name="Plant Physiol.">
        <title>Large-scale Arabidopsis phosphoproteome profiling reveals novel chloroplast kinase substrates and phosphorylation networks.</title>
        <authorList>
            <person name="Reiland S."/>
            <person name="Messerli G."/>
            <person name="Baerenfaller K."/>
            <person name="Gerrits B."/>
            <person name="Endler A."/>
            <person name="Grossmann J."/>
            <person name="Gruissem W."/>
            <person name="Baginsky S."/>
        </authorList>
    </citation>
    <scope>IDENTIFICATION BY MASS SPECTROMETRY [LARGE SCALE ANALYSIS]</scope>
</reference>
<reference key="8">
    <citation type="journal article" date="2011" name="J. Exp. Bot.">
        <title>Arabidopsis thaliana calcium-dependent lipid-binding protein (AtCLB): a novel repressor of abiotic stress response.</title>
        <authorList>
            <person name="de Silva K."/>
            <person name="Laska B."/>
            <person name="Brown C."/>
            <person name="Sederoff H.W."/>
            <person name="Khodakovskaya M."/>
        </authorList>
    </citation>
    <scope>FUNCTION</scope>
    <scope>DISRUPTION PHENOTYPE</scope>
    <scope>TISSUE SPECIFICITY</scope>
    <scope>SUBCELLULAR LOCATION</scope>
    <source>
        <strain>cv. Columbia</strain>
    </source>
</reference>
<reference key="9">
    <citation type="journal article" date="2017" name="Int. J. Mol. Sci.">
        <title>Identification and initial characterization of the effectors of an anther smut fungus and potential host target proteins.</title>
        <authorList>
            <person name="Kuppireddy V.S."/>
            <person name="Uversky V.N."/>
            <person name="Toh S.S."/>
            <person name="Tsai M.C."/>
            <person name="Beckerson W.C."/>
            <person name="Cahill C."/>
            <person name="Carman B."/>
            <person name="Perlin M.H."/>
        </authorList>
    </citation>
    <scope>INTERACTION WITH THE MICROBOTRYUM VIOLACEUM EFFECTOR MVLG_01732</scope>
</reference>
<name>CLB_ARATH</name>